<evidence type="ECO:0000255" key="1">
    <source>
        <dbReference type="HAMAP-Rule" id="MF_00041"/>
    </source>
</evidence>
<name>SYC_BRUME</name>
<accession>Q8YG89</accession>
<protein>
    <recommendedName>
        <fullName evidence="1">Cysteine--tRNA ligase</fullName>
        <ecNumber evidence="1">6.1.1.16</ecNumber>
    </recommendedName>
    <alternativeName>
        <fullName evidence="1">Cysteinyl-tRNA synthetase</fullName>
        <shortName evidence="1">CysRS</shortName>
    </alternativeName>
</protein>
<proteinExistence type="inferred from homology"/>
<sequence length="506" mass="56303">MPDTTPQLRLYNTLTRTKEAFAPIDAKNVRMYVCGPTVYDFAHIGNARPVIVFDVLFRLLRHVYGAQHVTYARNITDVDDKINARAARDYPDLPFNEAIRKVTESTNAQFQADVTALGNLQPTVQPRATEHMDEMRAMIDRLVQRGVAYVAQDHVLFSPSAMNARKGPRYGALARRSLDEMLAGARVDVASYKRDEMDFVLWKPSKKGEPGWPSPAGIETLGRPGWHIECSAMSMAKLLEPFGGGLKCDDPERNQFDIHGGGIDLVFPHHENEIAQSCCALGTERMANIWMHNGFLQVEGQKMSKSLGNFITIRDVLNDGLPQLGEWGDNTVRDRWAGLAARLSMLQTHYREPINWTAQRLAESADELHRWYGLLRDEGFGAPEKLSHASAVAAALCDDLNSWAAITALRQAFKVRDVAALGEGMALMGLLDPYFVTASDVPIFARADVDASAIAARIAERLNFINAKNWAEADRIRDELLQEGVQLKDSKDPATGERITTWDVVG</sequence>
<reference key="1">
    <citation type="journal article" date="2002" name="Proc. Natl. Acad. Sci. U.S.A.">
        <title>The genome sequence of the facultative intracellular pathogen Brucella melitensis.</title>
        <authorList>
            <person name="DelVecchio V.G."/>
            <person name="Kapatral V."/>
            <person name="Redkar R.J."/>
            <person name="Patra G."/>
            <person name="Mujer C."/>
            <person name="Los T."/>
            <person name="Ivanova N."/>
            <person name="Anderson I."/>
            <person name="Bhattacharyya A."/>
            <person name="Lykidis A."/>
            <person name="Reznik G."/>
            <person name="Jablonski L."/>
            <person name="Larsen N."/>
            <person name="D'Souza M."/>
            <person name="Bernal A."/>
            <person name="Mazur M."/>
            <person name="Goltsman E."/>
            <person name="Selkov E."/>
            <person name="Elzer P.H."/>
            <person name="Hagius S."/>
            <person name="O'Callaghan D."/>
            <person name="Letesson J.-J."/>
            <person name="Haselkorn R."/>
            <person name="Kyrpides N.C."/>
            <person name="Overbeek R."/>
        </authorList>
    </citation>
    <scope>NUCLEOTIDE SEQUENCE [LARGE SCALE GENOMIC DNA]</scope>
    <source>
        <strain>ATCC 23456 / CCUG 17765 / NCTC 10094 / 16M</strain>
    </source>
</reference>
<organism>
    <name type="scientific">Brucella melitensis biotype 1 (strain ATCC 23456 / CCUG 17765 / NCTC 10094 / 16M)</name>
    <dbReference type="NCBI Taxonomy" id="224914"/>
    <lineage>
        <taxon>Bacteria</taxon>
        <taxon>Pseudomonadati</taxon>
        <taxon>Pseudomonadota</taxon>
        <taxon>Alphaproteobacteria</taxon>
        <taxon>Hyphomicrobiales</taxon>
        <taxon>Brucellaceae</taxon>
        <taxon>Brucella/Ochrobactrum group</taxon>
        <taxon>Brucella</taxon>
    </lineage>
</organism>
<dbReference type="EC" id="6.1.1.16" evidence="1"/>
<dbReference type="EMBL" id="AE008917">
    <property type="protein sequence ID" value="AAL52453.1"/>
    <property type="molecule type" value="Genomic_DNA"/>
</dbReference>
<dbReference type="PIR" id="AB3411">
    <property type="entry name" value="AB3411"/>
</dbReference>
<dbReference type="RefSeq" id="WP_004683417.1">
    <property type="nucleotide sequence ID" value="NZ_GG703778.1"/>
</dbReference>
<dbReference type="SMR" id="Q8YG89"/>
<dbReference type="GeneID" id="29594111"/>
<dbReference type="KEGG" id="bme:BMEI1272"/>
<dbReference type="KEGG" id="bmel:DK63_132"/>
<dbReference type="PATRIC" id="fig|224914.52.peg.137"/>
<dbReference type="eggNOG" id="COG0215">
    <property type="taxonomic scope" value="Bacteria"/>
</dbReference>
<dbReference type="PhylomeDB" id="Q8YG89"/>
<dbReference type="Proteomes" id="UP000000419">
    <property type="component" value="Chromosome I"/>
</dbReference>
<dbReference type="GO" id="GO:0005829">
    <property type="term" value="C:cytosol"/>
    <property type="evidence" value="ECO:0007669"/>
    <property type="project" value="TreeGrafter"/>
</dbReference>
<dbReference type="GO" id="GO:0005524">
    <property type="term" value="F:ATP binding"/>
    <property type="evidence" value="ECO:0007669"/>
    <property type="project" value="UniProtKB-UniRule"/>
</dbReference>
<dbReference type="GO" id="GO:0004817">
    <property type="term" value="F:cysteine-tRNA ligase activity"/>
    <property type="evidence" value="ECO:0007669"/>
    <property type="project" value="UniProtKB-UniRule"/>
</dbReference>
<dbReference type="GO" id="GO:0008270">
    <property type="term" value="F:zinc ion binding"/>
    <property type="evidence" value="ECO:0007669"/>
    <property type="project" value="UniProtKB-UniRule"/>
</dbReference>
<dbReference type="GO" id="GO:0006423">
    <property type="term" value="P:cysteinyl-tRNA aminoacylation"/>
    <property type="evidence" value="ECO:0007669"/>
    <property type="project" value="UniProtKB-UniRule"/>
</dbReference>
<dbReference type="CDD" id="cd00672">
    <property type="entry name" value="CysRS_core"/>
    <property type="match status" value="1"/>
</dbReference>
<dbReference type="Gene3D" id="1.20.120.1910">
    <property type="entry name" value="Cysteine-tRNA ligase, C-terminal anti-codon recognition domain"/>
    <property type="match status" value="1"/>
</dbReference>
<dbReference type="Gene3D" id="3.40.50.620">
    <property type="entry name" value="HUPs"/>
    <property type="match status" value="1"/>
</dbReference>
<dbReference type="HAMAP" id="MF_00041">
    <property type="entry name" value="Cys_tRNA_synth"/>
    <property type="match status" value="1"/>
</dbReference>
<dbReference type="InterPro" id="IPR015803">
    <property type="entry name" value="Cys-tRNA-ligase"/>
</dbReference>
<dbReference type="InterPro" id="IPR024909">
    <property type="entry name" value="Cys-tRNA/MSH_ligase"/>
</dbReference>
<dbReference type="InterPro" id="IPR014729">
    <property type="entry name" value="Rossmann-like_a/b/a_fold"/>
</dbReference>
<dbReference type="InterPro" id="IPR032678">
    <property type="entry name" value="tRNA-synt_1_cat_dom"/>
</dbReference>
<dbReference type="InterPro" id="IPR009080">
    <property type="entry name" value="tRNAsynth_Ia_anticodon-bd"/>
</dbReference>
<dbReference type="NCBIfam" id="TIGR00435">
    <property type="entry name" value="cysS"/>
    <property type="match status" value="1"/>
</dbReference>
<dbReference type="PANTHER" id="PTHR10890:SF3">
    <property type="entry name" value="CYSTEINE--TRNA LIGASE, CYTOPLASMIC"/>
    <property type="match status" value="1"/>
</dbReference>
<dbReference type="PANTHER" id="PTHR10890">
    <property type="entry name" value="CYSTEINYL-TRNA SYNTHETASE"/>
    <property type="match status" value="1"/>
</dbReference>
<dbReference type="Pfam" id="PF01406">
    <property type="entry name" value="tRNA-synt_1e"/>
    <property type="match status" value="1"/>
</dbReference>
<dbReference type="PRINTS" id="PR00983">
    <property type="entry name" value="TRNASYNTHCYS"/>
</dbReference>
<dbReference type="SUPFAM" id="SSF47323">
    <property type="entry name" value="Anticodon-binding domain of a subclass of class I aminoacyl-tRNA synthetases"/>
    <property type="match status" value="1"/>
</dbReference>
<dbReference type="SUPFAM" id="SSF52374">
    <property type="entry name" value="Nucleotidylyl transferase"/>
    <property type="match status" value="1"/>
</dbReference>
<gene>
    <name evidence="1" type="primary">cysS</name>
    <name type="ordered locus">BMEI1272</name>
</gene>
<feature type="chain" id="PRO_0000159364" description="Cysteine--tRNA ligase">
    <location>
        <begin position="1"/>
        <end position="506"/>
    </location>
</feature>
<feature type="short sequence motif" description="'HIGH' region">
    <location>
        <begin position="36"/>
        <end position="46"/>
    </location>
</feature>
<feature type="short sequence motif" description="'KMSKS' region">
    <location>
        <begin position="302"/>
        <end position="306"/>
    </location>
</feature>
<feature type="binding site" evidence="1">
    <location>
        <position position="34"/>
    </location>
    <ligand>
        <name>Zn(2+)</name>
        <dbReference type="ChEBI" id="CHEBI:29105"/>
    </ligand>
</feature>
<feature type="binding site" evidence="1">
    <location>
        <position position="230"/>
    </location>
    <ligand>
        <name>Zn(2+)</name>
        <dbReference type="ChEBI" id="CHEBI:29105"/>
    </ligand>
</feature>
<feature type="binding site" evidence="1">
    <location>
        <position position="269"/>
    </location>
    <ligand>
        <name>Zn(2+)</name>
        <dbReference type="ChEBI" id="CHEBI:29105"/>
    </ligand>
</feature>
<feature type="binding site" evidence="1">
    <location>
        <position position="273"/>
    </location>
    <ligand>
        <name>Zn(2+)</name>
        <dbReference type="ChEBI" id="CHEBI:29105"/>
    </ligand>
</feature>
<feature type="binding site" evidence="1">
    <location>
        <position position="305"/>
    </location>
    <ligand>
        <name>ATP</name>
        <dbReference type="ChEBI" id="CHEBI:30616"/>
    </ligand>
</feature>
<comment type="catalytic activity">
    <reaction evidence="1">
        <text>tRNA(Cys) + L-cysteine + ATP = L-cysteinyl-tRNA(Cys) + AMP + diphosphate</text>
        <dbReference type="Rhea" id="RHEA:17773"/>
        <dbReference type="Rhea" id="RHEA-COMP:9661"/>
        <dbReference type="Rhea" id="RHEA-COMP:9679"/>
        <dbReference type="ChEBI" id="CHEBI:30616"/>
        <dbReference type="ChEBI" id="CHEBI:33019"/>
        <dbReference type="ChEBI" id="CHEBI:35235"/>
        <dbReference type="ChEBI" id="CHEBI:78442"/>
        <dbReference type="ChEBI" id="CHEBI:78517"/>
        <dbReference type="ChEBI" id="CHEBI:456215"/>
        <dbReference type="EC" id="6.1.1.16"/>
    </reaction>
</comment>
<comment type="cofactor">
    <cofactor evidence="1">
        <name>Zn(2+)</name>
        <dbReference type="ChEBI" id="CHEBI:29105"/>
    </cofactor>
    <text evidence="1">Binds 1 zinc ion per subunit.</text>
</comment>
<comment type="subunit">
    <text evidence="1">Monomer.</text>
</comment>
<comment type="subcellular location">
    <subcellularLocation>
        <location evidence="1">Cytoplasm</location>
    </subcellularLocation>
</comment>
<comment type="similarity">
    <text evidence="1">Belongs to the class-I aminoacyl-tRNA synthetase family.</text>
</comment>
<keyword id="KW-0030">Aminoacyl-tRNA synthetase</keyword>
<keyword id="KW-0067">ATP-binding</keyword>
<keyword id="KW-0963">Cytoplasm</keyword>
<keyword id="KW-0436">Ligase</keyword>
<keyword id="KW-0479">Metal-binding</keyword>
<keyword id="KW-0547">Nucleotide-binding</keyword>
<keyword id="KW-0648">Protein biosynthesis</keyword>
<keyword id="KW-0862">Zinc</keyword>